<feature type="chain" id="PRO_0000423638" description="Dermonecrotic toxin">
    <location>
        <begin position="1" status="less than"/>
        <end position="273"/>
    </location>
</feature>
<feature type="active site" description="Nucleophile" evidence="5">
    <location>
        <position position="35"/>
    </location>
</feature>
<feature type="binding site" evidence="5">
    <location>
        <position position="20"/>
    </location>
    <ligand>
        <name>Mg(2+)</name>
        <dbReference type="ChEBI" id="CHEBI:18420"/>
    </ligand>
</feature>
<feature type="binding site" evidence="5">
    <location>
        <position position="22"/>
    </location>
    <ligand>
        <name>Mg(2+)</name>
        <dbReference type="ChEBI" id="CHEBI:18420"/>
    </ligand>
</feature>
<feature type="binding site" evidence="5">
    <location>
        <position position="79"/>
    </location>
    <ligand>
        <name>Mg(2+)</name>
        <dbReference type="ChEBI" id="CHEBI:18420"/>
    </ligand>
</feature>
<feature type="disulfide bond" evidence="5">
    <location>
        <begin position="39"/>
        <end position="45"/>
    </location>
</feature>
<feature type="non-terminal residue">
    <location>
        <position position="1"/>
    </location>
</feature>
<sequence>MVNAVKQIPTFLNDGANAIEADITFKGAVPTYSYHGTPCDFGRDCIRWEYFNVFLQTLRDYTTPGNSKYREKFILFVLDLKTGSLNNHEVRKAGENVAKGLLENYWNNGNNGGRAYVVLSLPDIAHYEFIRTFKEVLKTKGHENLLDKVGYDLSGPYWPSLPSLDSVHEAFKKAGVDGHVWLSDGLTNWAALDDMARLKQIVERRDSENGFISKVYYWSVDKYSTTRTALEVGVDGIMTNYPYVIIDVLNEAKYKDKYRLATYDDNPWETFKN</sequence>
<proteinExistence type="evidence at transcript level"/>
<dbReference type="EC" id="4.6.1.-" evidence="4"/>
<dbReference type="EMBL" id="GU121906">
    <property type="protein sequence ID" value="ADP00409.1"/>
    <property type="molecule type" value="mRNA"/>
</dbReference>
<dbReference type="SMR" id="E5D3Z9"/>
<dbReference type="GO" id="GO:0005576">
    <property type="term" value="C:extracellular region"/>
    <property type="evidence" value="ECO:0007669"/>
    <property type="project" value="UniProtKB-SubCell"/>
</dbReference>
<dbReference type="GO" id="GO:0016829">
    <property type="term" value="F:lyase activity"/>
    <property type="evidence" value="ECO:0007669"/>
    <property type="project" value="UniProtKB-KW"/>
</dbReference>
<dbReference type="GO" id="GO:0046872">
    <property type="term" value="F:metal ion binding"/>
    <property type="evidence" value="ECO:0007669"/>
    <property type="project" value="UniProtKB-KW"/>
</dbReference>
<dbReference type="GO" id="GO:0008081">
    <property type="term" value="F:phosphoric diester hydrolase activity"/>
    <property type="evidence" value="ECO:0007669"/>
    <property type="project" value="InterPro"/>
</dbReference>
<dbReference type="GO" id="GO:0090729">
    <property type="term" value="F:toxin activity"/>
    <property type="evidence" value="ECO:0007669"/>
    <property type="project" value="UniProtKB-KW"/>
</dbReference>
<dbReference type="GO" id="GO:0031640">
    <property type="term" value="P:killing of cells of another organism"/>
    <property type="evidence" value="ECO:0007669"/>
    <property type="project" value="UniProtKB-KW"/>
</dbReference>
<dbReference type="GO" id="GO:0016042">
    <property type="term" value="P:lipid catabolic process"/>
    <property type="evidence" value="ECO:0007669"/>
    <property type="project" value="UniProtKB-KW"/>
</dbReference>
<dbReference type="CDD" id="cd08576">
    <property type="entry name" value="GDPD_like_SMaseD_PLD"/>
    <property type="match status" value="1"/>
</dbReference>
<dbReference type="Gene3D" id="3.20.20.190">
    <property type="entry name" value="Phosphatidylinositol (PI) phosphodiesterase"/>
    <property type="match status" value="1"/>
</dbReference>
<dbReference type="InterPro" id="IPR017946">
    <property type="entry name" value="PLC-like_Pdiesterase_TIM-brl"/>
</dbReference>
<dbReference type="SUPFAM" id="SSF51695">
    <property type="entry name" value="PLC-like phosphodiesterases"/>
    <property type="match status" value="1"/>
</dbReference>
<organism>
    <name type="scientific">Loxosceles laeta</name>
    <name type="common">South American recluse spider</name>
    <name type="synonym">Scytodes laeta</name>
    <dbReference type="NCBI Taxonomy" id="58217"/>
    <lineage>
        <taxon>Eukaryota</taxon>
        <taxon>Metazoa</taxon>
        <taxon>Ecdysozoa</taxon>
        <taxon>Arthropoda</taxon>
        <taxon>Chelicerata</taxon>
        <taxon>Arachnida</taxon>
        <taxon>Araneae</taxon>
        <taxon>Araneomorphae</taxon>
        <taxon>Haplogynae</taxon>
        <taxon>Scytodoidea</taxon>
        <taxon>Sicariidae</taxon>
        <taxon>Loxosceles</taxon>
    </lineage>
</organism>
<protein>
    <recommendedName>
        <fullName>Dermonecrotic toxin</fullName>
        <ecNumber evidence="4">4.6.1.-</ecNumber>
    </recommendedName>
    <alternativeName>
        <fullName>Phospholipase D isoform 2</fullName>
        <shortName evidence="6">LlPLD2</shortName>
        <shortName>PLD2</shortName>
    </alternativeName>
    <alternativeName>
        <fullName>Sphingomyelin phosphodiesterase D</fullName>
        <shortName>SMD</shortName>
        <shortName>SMase D</shortName>
        <shortName>Sphingomyelinase D</shortName>
    </alternativeName>
</protein>
<reference key="1">
    <citation type="journal article" date="2011" name="J. Biochem. Mol. Toxicol.">
        <title>Two new phospholipase D isoforms of Loxosceles laeta: cloning, heterologous expression, functional characterization, and potential biotechnological application.</title>
        <authorList>
            <person name="Catalan A."/>
            <person name="Cortes W."/>
            <person name="Sagua H."/>
            <person name="Gonzalez J."/>
            <person name="Araya J.E."/>
        </authorList>
    </citation>
    <scope>NUCLEOTIDE SEQUENCE [MRNA]</scope>
    <source>
        <tissue>Venom gland</tissue>
    </source>
</reference>
<comment type="function">
    <text evidence="1 3">Dermonecrotic toxins cleave the phosphodiester linkage between the phosphate and headgroup of certain phospholipids (sphingolipid and lysolipid substrates), forming an alcohol (often choline) and a cyclic phosphate (By similarity). This toxin acts on sphingomyelin (SM) (By similarity). It may also act on ceramide phosphoethanolamine (CPE), lysophosphatidylcholine (LPC) and lysophosphatidylethanolamine (LPE), but not on lysophosphatidylserine (LPS), and lysophosphatidylglycerol (LPG) (By similarity). It acts by transphosphatidylation, releasing exclusively cyclic phosphate products as second products (By similarity). Induces dermonecrosis, hemolysis, increased vascular permeability, edema, inflammatory response, and platelet aggregation (By similarity).</text>
</comment>
<comment type="catalytic activity">
    <reaction evidence="1">
        <text>an N-(acyl)-sphingosylphosphocholine = an N-(acyl)-sphingosyl-1,3-cyclic phosphate + choline</text>
        <dbReference type="Rhea" id="RHEA:60652"/>
        <dbReference type="ChEBI" id="CHEBI:15354"/>
        <dbReference type="ChEBI" id="CHEBI:64583"/>
        <dbReference type="ChEBI" id="CHEBI:143892"/>
    </reaction>
</comment>
<comment type="catalytic activity">
    <reaction evidence="1">
        <text>an N-(acyl)-sphingosylphosphoethanolamine = an N-(acyl)-sphingosyl-1,3-cyclic phosphate + ethanolamine</text>
        <dbReference type="Rhea" id="RHEA:60648"/>
        <dbReference type="ChEBI" id="CHEBI:57603"/>
        <dbReference type="ChEBI" id="CHEBI:143891"/>
        <dbReference type="ChEBI" id="CHEBI:143892"/>
    </reaction>
</comment>
<comment type="catalytic activity">
    <reaction evidence="1">
        <text>a 1-acyl-sn-glycero-3-phosphocholine = a 1-acyl-sn-glycero-2,3-cyclic phosphate + choline</text>
        <dbReference type="Rhea" id="RHEA:60700"/>
        <dbReference type="ChEBI" id="CHEBI:15354"/>
        <dbReference type="ChEBI" id="CHEBI:58168"/>
        <dbReference type="ChEBI" id="CHEBI:143947"/>
    </reaction>
</comment>
<comment type="catalytic activity">
    <reaction evidence="1">
        <text>a 1-acyl-sn-glycero-3-phosphoethanolamine = a 1-acyl-sn-glycero-2,3-cyclic phosphate + ethanolamine</text>
        <dbReference type="Rhea" id="RHEA:60704"/>
        <dbReference type="ChEBI" id="CHEBI:57603"/>
        <dbReference type="ChEBI" id="CHEBI:64381"/>
        <dbReference type="ChEBI" id="CHEBI:143947"/>
    </reaction>
</comment>
<comment type="cofactor">
    <cofactor evidence="5">
        <name>Mg(2+)</name>
        <dbReference type="ChEBI" id="CHEBI:18420"/>
    </cofactor>
    <text evidence="5">Binds 1 Mg(2+) ion per subunit.</text>
</comment>
<comment type="subcellular location">
    <subcellularLocation>
        <location evidence="8">Secreted</location>
    </subcellularLocation>
</comment>
<comment type="tissue specificity">
    <text evidence="8">Expressed by the venom gland.</text>
</comment>
<comment type="similarity">
    <text evidence="7">Belongs to the arthropod phospholipase D family. Class I subfamily.</text>
</comment>
<comment type="caution">
    <text evidence="7">The lack of peptide signal and first catalytic site is due to the cloning strategy (the sequence was amplified from the second ATG codon). The functional tests have been done using an incomplete recombinant protein resulting in an inactive protein. However, this functionally inactive recombinant protein behaved as a good immunogen, capable of inducing immunoprotection in test animals.</text>
</comment>
<comment type="caution">
    <text evidence="1 2 4">The most common activity assay for dermonecrotic toxins detects enzymatic activity by monitoring choline release from substrate. Liberation of choline from sphingomyelin (SM) or lysophosphatidylcholine (LPC) is commonly assumed to result from substrate hydrolysis, giving either ceramide-1-phosphate (C1P) or lysophosphatidic acid (LPA), respectively, as a second product. However, two studies from Lajoie and colleagues (2013 and 2015) report the observation of exclusive formation of cyclic phosphate products as second products, resulting from intramolecular transphosphatidylation. Cyclic phosphates have vastly different biological properties from their monoester counterparts, and they may be relevant to the pathology of brown spider envenomation.</text>
</comment>
<evidence type="ECO:0000250" key="1">
    <source>
        <dbReference type="UniProtKB" id="A0A0D4WTV1"/>
    </source>
</evidence>
<evidence type="ECO:0000250" key="2">
    <source>
        <dbReference type="UniProtKB" id="A0A0D4WV12"/>
    </source>
</evidence>
<evidence type="ECO:0000250" key="3">
    <source>
        <dbReference type="UniProtKB" id="P0CE80"/>
    </source>
</evidence>
<evidence type="ECO:0000250" key="4">
    <source>
        <dbReference type="UniProtKB" id="Q4ZFU2"/>
    </source>
</evidence>
<evidence type="ECO:0000250" key="5">
    <source>
        <dbReference type="UniProtKB" id="Q8I914"/>
    </source>
</evidence>
<evidence type="ECO:0000303" key="6">
    <source>
    </source>
</evidence>
<evidence type="ECO:0000305" key="7"/>
<evidence type="ECO:0000305" key="8">
    <source>
    </source>
</evidence>
<keyword id="KW-0204">Cytolysis</keyword>
<keyword id="KW-1061">Dermonecrotic toxin</keyword>
<keyword id="KW-1015">Disulfide bond</keyword>
<keyword id="KW-0354">Hemolysis</keyword>
<keyword id="KW-0442">Lipid degradation</keyword>
<keyword id="KW-0443">Lipid metabolism</keyword>
<keyword id="KW-0456">Lyase</keyword>
<keyword id="KW-0460">Magnesium</keyword>
<keyword id="KW-0479">Metal-binding</keyword>
<keyword id="KW-0964">Secreted</keyword>
<keyword id="KW-0800">Toxin</keyword>
<accession>E5D3Z9</accession>
<name>A32B_LOXLA</name>